<evidence type="ECO:0000255" key="1"/>
<evidence type="ECO:0000255" key="2">
    <source>
        <dbReference type="PROSITE-ProRule" id="PRU00521"/>
    </source>
</evidence>
<evidence type="ECO:0000305" key="3"/>
<proteinExistence type="inferred from homology"/>
<accession>Q8NH07</accession>
<protein>
    <recommendedName>
        <fullName>Olfactory receptor 11H2</fullName>
    </recommendedName>
    <alternativeName>
        <fullName>Olfactory receptor OR14-1</fullName>
    </alternativeName>
</protein>
<keyword id="KW-1003">Cell membrane</keyword>
<keyword id="KW-1015">Disulfide bond</keyword>
<keyword id="KW-0297">G-protein coupled receptor</keyword>
<keyword id="KW-0325">Glycoprotein</keyword>
<keyword id="KW-0472">Membrane</keyword>
<keyword id="KW-0552">Olfaction</keyword>
<keyword id="KW-0675">Receptor</keyword>
<keyword id="KW-1185">Reference proteome</keyword>
<keyword id="KW-0716">Sensory transduction</keyword>
<keyword id="KW-0807">Transducer</keyword>
<keyword id="KW-0812">Transmembrane</keyword>
<keyword id="KW-1133">Transmembrane helix</keyword>
<organism>
    <name type="scientific">Homo sapiens</name>
    <name type="common">Human</name>
    <dbReference type="NCBI Taxonomy" id="9606"/>
    <lineage>
        <taxon>Eukaryota</taxon>
        <taxon>Metazoa</taxon>
        <taxon>Chordata</taxon>
        <taxon>Craniata</taxon>
        <taxon>Vertebrata</taxon>
        <taxon>Euteleostomi</taxon>
        <taxon>Mammalia</taxon>
        <taxon>Eutheria</taxon>
        <taxon>Euarchontoglires</taxon>
        <taxon>Primates</taxon>
        <taxon>Haplorrhini</taxon>
        <taxon>Catarrhini</taxon>
        <taxon>Hominidae</taxon>
        <taxon>Homo</taxon>
    </lineage>
</organism>
<name>O11H2_HUMAN</name>
<reference key="1">
    <citation type="submission" date="2001-07" db="EMBL/GenBank/DDBJ databases">
        <title>Genome-wide discovery and analysis of human seven transmembrane helix receptor genes.</title>
        <authorList>
            <person name="Suwa M."/>
            <person name="Sato T."/>
            <person name="Okouchi I."/>
            <person name="Arita M."/>
            <person name="Futami K."/>
            <person name="Matsumoto S."/>
            <person name="Tsutsumi S."/>
            <person name="Aburatani H."/>
            <person name="Asai K."/>
            <person name="Akiyama Y."/>
        </authorList>
    </citation>
    <scope>NUCLEOTIDE SEQUENCE [GENOMIC DNA]</scope>
</reference>
<reference key="2">
    <citation type="journal article" date="2004" name="Proc. Natl. Acad. Sci. U.S.A.">
        <title>The human olfactory receptor gene family.</title>
        <authorList>
            <person name="Malnic B."/>
            <person name="Godfrey P.A."/>
            <person name="Buck L.B."/>
        </authorList>
    </citation>
    <scope>IDENTIFICATION</scope>
</reference>
<reference key="3">
    <citation type="journal article" date="2004" name="Proc. Natl. Acad. Sci. U.S.A.">
        <authorList>
            <person name="Malnic B."/>
            <person name="Godfrey P.A."/>
            <person name="Buck L.B."/>
        </authorList>
    </citation>
    <scope>ERRATUM OF PUBMED:14983052</scope>
</reference>
<gene>
    <name type="primary">OR11H2</name>
    <name type="synonym">C14orf15</name>
    <name type="synonym">OR11H2P</name>
</gene>
<comment type="function">
    <text evidence="3">Odorant receptor.</text>
</comment>
<comment type="subcellular location">
    <subcellularLocation>
        <location evidence="3">Cell membrane</location>
        <topology evidence="3">Multi-pass membrane protein</topology>
    </subcellularLocation>
</comment>
<comment type="similarity">
    <text evidence="2">Belongs to the G-protein coupled receptor 1 family.</text>
</comment>
<comment type="caution">
    <text evidence="3">It is uncertain whether Met-1 or Met-12 is the initiator.</text>
</comment>
<comment type="online information" name="Human Olfactory Receptor Data Exploratorium (HORDE)">
    <link uri="http://genome.weizmann.ac.il/horde/card/index/symbol:OR11H2"/>
</comment>
<dbReference type="EMBL" id="AB065607">
    <property type="protein sequence ID" value="BAC05834.1"/>
    <property type="molecule type" value="Genomic_DNA"/>
</dbReference>
<dbReference type="EMBL" id="BK004489">
    <property type="protein sequence ID" value="DAA04887.1"/>
    <property type="molecule type" value="Genomic_DNA"/>
</dbReference>
<dbReference type="RefSeq" id="NP_001184216.1">
    <property type="nucleotide sequence ID" value="NM_001197287.1"/>
</dbReference>
<dbReference type="SMR" id="Q8NH07"/>
<dbReference type="FunCoup" id="Q8NH07">
    <property type="interactions" value="417"/>
</dbReference>
<dbReference type="STRING" id="9606.ENSP00000492923"/>
<dbReference type="GlyCosmos" id="Q8NH07">
    <property type="glycosylation" value="3 sites, No reported glycans"/>
</dbReference>
<dbReference type="GlyGen" id="Q8NH07">
    <property type="glycosylation" value="3 sites"/>
</dbReference>
<dbReference type="BioMuta" id="OR11H2"/>
<dbReference type="DMDM" id="74760292"/>
<dbReference type="PaxDb" id="9606-ENSP00000485150"/>
<dbReference type="DNASU" id="79334"/>
<dbReference type="GeneID" id="79334"/>
<dbReference type="KEGG" id="hsa:79334"/>
<dbReference type="UCSC" id="uc058yqs.1">
    <property type="organism name" value="human"/>
</dbReference>
<dbReference type="AGR" id="HGNC:14716"/>
<dbReference type="CTD" id="79334"/>
<dbReference type="GeneCards" id="OR11H2"/>
<dbReference type="HGNC" id="HGNC:14716">
    <property type="gene designation" value="OR11H2"/>
</dbReference>
<dbReference type="HPA" id="ENSG00000258453">
    <property type="expression patterns" value="Not detected"/>
</dbReference>
<dbReference type="neXtProt" id="NX_Q8NH07"/>
<dbReference type="VEuPathDB" id="HostDB:ENSG00000258453"/>
<dbReference type="eggNOG" id="ENOG502QVH7">
    <property type="taxonomic scope" value="Eukaryota"/>
</dbReference>
<dbReference type="HOGENOM" id="CLU_012526_1_0_1"/>
<dbReference type="InParanoid" id="Q8NH07"/>
<dbReference type="OMA" id="TDPVNMN"/>
<dbReference type="PAN-GO" id="Q8NH07">
    <property type="GO annotations" value="0 GO annotations based on evolutionary models"/>
</dbReference>
<dbReference type="PhylomeDB" id="Q8NH07"/>
<dbReference type="PathwayCommons" id="Q8NH07"/>
<dbReference type="Reactome" id="R-HSA-9752946">
    <property type="pathway name" value="Expression and translocation of olfactory receptors"/>
</dbReference>
<dbReference type="BioGRID-ORCS" id="79334">
    <property type="hits" value="10 hits in 196 CRISPR screens"/>
</dbReference>
<dbReference type="GenomeRNAi" id="79334"/>
<dbReference type="Pharos" id="Q8NH07">
    <property type="development level" value="Tdark"/>
</dbReference>
<dbReference type="PRO" id="PR:Q8NH07"/>
<dbReference type="Proteomes" id="UP000005640">
    <property type="component" value="Chromosome 14"/>
</dbReference>
<dbReference type="RNAct" id="Q8NH07">
    <property type="molecule type" value="protein"/>
</dbReference>
<dbReference type="Bgee" id="ENSG00000258453">
    <property type="expression patterns" value="Expressed in male germ line stem cell (sensu Vertebrata) in testis and 3 other cell types or tissues"/>
</dbReference>
<dbReference type="ExpressionAtlas" id="Q8NH07">
    <property type="expression patterns" value="baseline and differential"/>
</dbReference>
<dbReference type="GO" id="GO:0005886">
    <property type="term" value="C:plasma membrane"/>
    <property type="evidence" value="ECO:0007669"/>
    <property type="project" value="UniProtKB-SubCell"/>
</dbReference>
<dbReference type="GO" id="GO:0004930">
    <property type="term" value="F:G protein-coupled receptor activity"/>
    <property type="evidence" value="ECO:0007669"/>
    <property type="project" value="UniProtKB-KW"/>
</dbReference>
<dbReference type="GO" id="GO:0004984">
    <property type="term" value="F:olfactory receptor activity"/>
    <property type="evidence" value="ECO:0007669"/>
    <property type="project" value="InterPro"/>
</dbReference>
<dbReference type="CDD" id="cd15913">
    <property type="entry name" value="7tmA_OR11G-like"/>
    <property type="match status" value="1"/>
</dbReference>
<dbReference type="FunFam" id="1.10.1220.70:FF:000001">
    <property type="entry name" value="Olfactory receptor"/>
    <property type="match status" value="1"/>
</dbReference>
<dbReference type="FunFam" id="1.20.1070.10:FF:000001">
    <property type="entry name" value="Olfactory receptor"/>
    <property type="match status" value="1"/>
</dbReference>
<dbReference type="Gene3D" id="1.20.1070.10">
    <property type="entry name" value="Rhodopsin 7-helix transmembrane proteins"/>
    <property type="match status" value="1"/>
</dbReference>
<dbReference type="InterPro" id="IPR000276">
    <property type="entry name" value="GPCR_Rhodpsn"/>
</dbReference>
<dbReference type="InterPro" id="IPR017452">
    <property type="entry name" value="GPCR_Rhodpsn_7TM"/>
</dbReference>
<dbReference type="InterPro" id="IPR000725">
    <property type="entry name" value="Olfact_rcpt"/>
</dbReference>
<dbReference type="InterPro" id="IPR050939">
    <property type="entry name" value="Olfactory_GPCR1"/>
</dbReference>
<dbReference type="PANTHER" id="PTHR24242">
    <property type="entry name" value="G-PROTEIN COUPLED RECEPTOR"/>
    <property type="match status" value="1"/>
</dbReference>
<dbReference type="PANTHER" id="PTHR24242:SF201">
    <property type="entry name" value="OLFACTORY RECEPTOR 11H1-RELATED"/>
    <property type="match status" value="1"/>
</dbReference>
<dbReference type="Pfam" id="PF13853">
    <property type="entry name" value="7tm_4"/>
    <property type="match status" value="1"/>
</dbReference>
<dbReference type="PRINTS" id="PR00237">
    <property type="entry name" value="GPCRRHODOPSN"/>
</dbReference>
<dbReference type="PRINTS" id="PR00245">
    <property type="entry name" value="OLFACTORYR"/>
</dbReference>
<dbReference type="SUPFAM" id="SSF81321">
    <property type="entry name" value="Family A G protein-coupled receptor-like"/>
    <property type="match status" value="1"/>
</dbReference>
<dbReference type="PROSITE" id="PS50262">
    <property type="entry name" value="G_PROTEIN_RECEP_F1_2"/>
    <property type="match status" value="1"/>
</dbReference>
<sequence>MCPLTLHVTGLMNVSEPNSSFAFVNEFILQGFSCEWTIQIFLFSLFTTIYALTITGNGAIAFVLWCDRRLHTPMYMFLGNFSFLEIWYVSSTVPKMLVNFLSEKKNISFAGCFLQFYFFFSLGTSECLLLTVMAFDQYLAICRPLLYPNIMTGHLYAKLVILCWVCGFLWFLIPIVLISQKPFCGPNIIDHVVCDPGPLFALDCVSAPRIQLFCYTLSSLVIFGNFLFIIGSYTLVLKAVLGMPSSTGRHKAFSTCGSHLAVVSLCYSPLMVMYVSPGLGHSTGMQKIETLFYAMVTPLFNPLIYSLQNKEIKAALRKVLGSSNII</sequence>
<feature type="chain" id="PRO_0000332963" description="Olfactory receptor 11H2">
    <location>
        <begin position="1"/>
        <end position="326"/>
    </location>
</feature>
<feature type="topological domain" description="Extracellular" evidence="1">
    <location>
        <begin position="1"/>
        <end position="44"/>
    </location>
</feature>
<feature type="transmembrane region" description="Helical; Name=1" evidence="1">
    <location>
        <begin position="45"/>
        <end position="65"/>
    </location>
</feature>
<feature type="topological domain" description="Cytoplasmic" evidence="1">
    <location>
        <begin position="66"/>
        <end position="72"/>
    </location>
</feature>
<feature type="transmembrane region" description="Helical; Name=2" evidence="1">
    <location>
        <begin position="73"/>
        <end position="93"/>
    </location>
</feature>
<feature type="topological domain" description="Extracellular" evidence="1">
    <location>
        <begin position="94"/>
        <end position="112"/>
    </location>
</feature>
<feature type="transmembrane region" description="Helical; Name=3" evidence="1">
    <location>
        <begin position="113"/>
        <end position="133"/>
    </location>
</feature>
<feature type="topological domain" description="Cytoplasmic" evidence="1">
    <location>
        <begin position="134"/>
        <end position="158"/>
    </location>
</feature>
<feature type="transmembrane region" description="Helical; Name=4" evidence="1">
    <location>
        <begin position="159"/>
        <end position="179"/>
    </location>
</feature>
<feature type="topological domain" description="Extracellular" evidence="1">
    <location>
        <begin position="180"/>
        <end position="216"/>
    </location>
</feature>
<feature type="transmembrane region" description="Helical; Name=5" evidence="1">
    <location>
        <begin position="217"/>
        <end position="237"/>
    </location>
</feature>
<feature type="topological domain" description="Cytoplasmic" evidence="1">
    <location>
        <begin position="238"/>
        <end position="259"/>
    </location>
</feature>
<feature type="transmembrane region" description="Helical; Name=6" evidence="1">
    <location>
        <begin position="260"/>
        <end position="280"/>
    </location>
</feature>
<feature type="topological domain" description="Extracellular" evidence="1">
    <location>
        <begin position="281"/>
        <end position="287"/>
    </location>
</feature>
<feature type="transmembrane region" description="Helical; Name=7" evidence="1">
    <location>
        <begin position="288"/>
        <end position="308"/>
    </location>
</feature>
<feature type="topological domain" description="Cytoplasmic" evidence="1">
    <location>
        <begin position="309"/>
        <end position="326"/>
    </location>
</feature>
<feature type="glycosylation site" description="N-linked (GlcNAc...) asparagine" evidence="1">
    <location>
        <position position="13"/>
    </location>
</feature>
<feature type="glycosylation site" description="N-linked (GlcNAc...) asparagine" evidence="1">
    <location>
        <position position="18"/>
    </location>
</feature>
<feature type="glycosylation site" description="N-linked (GlcNAc...) asparagine" evidence="1">
    <location>
        <position position="106"/>
    </location>
</feature>
<feature type="disulfide bond" evidence="2">
    <location>
        <begin position="112"/>
        <end position="194"/>
    </location>
</feature>